<gene>
    <name type="primary">ycjV</name>
    <name type="ordered locus">c1790</name>
</gene>
<dbReference type="EMBL" id="AE014075">
    <property type="protein sequence ID" value="AAN80256.1"/>
    <property type="molecule type" value="Genomic_DNA"/>
</dbReference>
<dbReference type="RefSeq" id="WP_000057992.1">
    <property type="nucleotide sequence ID" value="NZ_CP051263.1"/>
</dbReference>
<dbReference type="SMR" id="Q8FHR3"/>
<dbReference type="STRING" id="199310.c1790"/>
<dbReference type="KEGG" id="ecc:c1790"/>
<dbReference type="eggNOG" id="COG3842">
    <property type="taxonomic scope" value="Bacteria"/>
</dbReference>
<dbReference type="HOGENOM" id="CLU_000604_1_1_6"/>
<dbReference type="BioCyc" id="ECOL199310:C1790-MONOMER"/>
<dbReference type="Proteomes" id="UP000001410">
    <property type="component" value="Chromosome"/>
</dbReference>
<dbReference type="GO" id="GO:0055052">
    <property type="term" value="C:ATP-binding cassette (ABC) transporter complex, substrate-binding subunit-containing"/>
    <property type="evidence" value="ECO:0007669"/>
    <property type="project" value="TreeGrafter"/>
</dbReference>
<dbReference type="GO" id="GO:0140359">
    <property type="term" value="F:ABC-type transporter activity"/>
    <property type="evidence" value="ECO:0007669"/>
    <property type="project" value="InterPro"/>
</dbReference>
<dbReference type="GO" id="GO:0005524">
    <property type="term" value="F:ATP binding"/>
    <property type="evidence" value="ECO:0007669"/>
    <property type="project" value="UniProtKB-KW"/>
</dbReference>
<dbReference type="GO" id="GO:0016887">
    <property type="term" value="F:ATP hydrolysis activity"/>
    <property type="evidence" value="ECO:0007669"/>
    <property type="project" value="InterPro"/>
</dbReference>
<dbReference type="GO" id="GO:0008643">
    <property type="term" value="P:carbohydrate transport"/>
    <property type="evidence" value="ECO:0007669"/>
    <property type="project" value="InterPro"/>
</dbReference>
<dbReference type="CDD" id="cd03301">
    <property type="entry name" value="ABC_MalK_N"/>
    <property type="match status" value="1"/>
</dbReference>
<dbReference type="FunFam" id="3.40.50.300:FF:000042">
    <property type="entry name" value="Maltose/maltodextrin ABC transporter, ATP-binding protein"/>
    <property type="match status" value="1"/>
</dbReference>
<dbReference type="Gene3D" id="2.40.50.100">
    <property type="match status" value="1"/>
</dbReference>
<dbReference type="Gene3D" id="2.40.50.140">
    <property type="entry name" value="Nucleic acid-binding proteins"/>
    <property type="match status" value="1"/>
</dbReference>
<dbReference type="Gene3D" id="3.40.50.300">
    <property type="entry name" value="P-loop containing nucleotide triphosphate hydrolases"/>
    <property type="match status" value="1"/>
</dbReference>
<dbReference type="InterPro" id="IPR003593">
    <property type="entry name" value="AAA+_ATPase"/>
</dbReference>
<dbReference type="InterPro" id="IPR003439">
    <property type="entry name" value="ABC_transporter-like_ATP-bd"/>
</dbReference>
<dbReference type="InterPro" id="IPR017871">
    <property type="entry name" value="ABC_transporter-like_CS"/>
</dbReference>
<dbReference type="InterPro" id="IPR015855">
    <property type="entry name" value="ABC_transpr_MalK-like"/>
</dbReference>
<dbReference type="InterPro" id="IPR047641">
    <property type="entry name" value="ABC_transpr_MalK/UgpC-like"/>
</dbReference>
<dbReference type="InterPro" id="IPR008995">
    <property type="entry name" value="Mo/tungstate-bd_C_term_dom"/>
</dbReference>
<dbReference type="InterPro" id="IPR012340">
    <property type="entry name" value="NA-bd_OB-fold"/>
</dbReference>
<dbReference type="InterPro" id="IPR040582">
    <property type="entry name" value="OB_MalK-like"/>
</dbReference>
<dbReference type="InterPro" id="IPR027417">
    <property type="entry name" value="P-loop_NTPase"/>
</dbReference>
<dbReference type="InterPro" id="IPR005116">
    <property type="entry name" value="Transp-assoc_OB_typ1"/>
</dbReference>
<dbReference type="NCBIfam" id="NF008653">
    <property type="entry name" value="PRK11650.1"/>
    <property type="match status" value="1"/>
</dbReference>
<dbReference type="PANTHER" id="PTHR43875">
    <property type="entry name" value="MALTODEXTRIN IMPORT ATP-BINDING PROTEIN MSMX"/>
    <property type="match status" value="1"/>
</dbReference>
<dbReference type="PANTHER" id="PTHR43875:SF1">
    <property type="entry name" value="OSMOPROTECTIVE COMPOUNDS UPTAKE ATP-BINDING PROTEIN GGTA"/>
    <property type="match status" value="1"/>
</dbReference>
<dbReference type="Pfam" id="PF00005">
    <property type="entry name" value="ABC_tran"/>
    <property type="match status" value="1"/>
</dbReference>
<dbReference type="Pfam" id="PF17912">
    <property type="entry name" value="OB_MalK"/>
    <property type="match status" value="1"/>
</dbReference>
<dbReference type="Pfam" id="PF03459">
    <property type="entry name" value="TOBE"/>
    <property type="match status" value="1"/>
</dbReference>
<dbReference type="SMART" id="SM00382">
    <property type="entry name" value="AAA"/>
    <property type="match status" value="1"/>
</dbReference>
<dbReference type="SUPFAM" id="SSF50331">
    <property type="entry name" value="MOP-like"/>
    <property type="match status" value="1"/>
</dbReference>
<dbReference type="SUPFAM" id="SSF52540">
    <property type="entry name" value="P-loop containing nucleoside triphosphate hydrolases"/>
    <property type="match status" value="1"/>
</dbReference>
<dbReference type="PROSITE" id="PS00211">
    <property type="entry name" value="ABC_TRANSPORTER_1"/>
    <property type="match status" value="1"/>
</dbReference>
<dbReference type="PROSITE" id="PS50893">
    <property type="entry name" value="ABC_TRANSPORTER_2"/>
    <property type="match status" value="1"/>
</dbReference>
<keyword id="KW-0067">ATP-binding</keyword>
<keyword id="KW-0547">Nucleotide-binding</keyword>
<keyword id="KW-1185">Reference proteome</keyword>
<keyword id="KW-0813">Transport</keyword>
<reference key="1">
    <citation type="journal article" date="2002" name="Proc. Natl. Acad. Sci. U.S.A.">
        <title>Extensive mosaic structure revealed by the complete genome sequence of uropathogenic Escherichia coli.</title>
        <authorList>
            <person name="Welch R.A."/>
            <person name="Burland V."/>
            <person name="Plunkett G. III"/>
            <person name="Redford P."/>
            <person name="Roesch P."/>
            <person name="Rasko D."/>
            <person name="Buckles E.L."/>
            <person name="Liou S.-R."/>
            <person name="Boutin A."/>
            <person name="Hackett J."/>
            <person name="Stroud D."/>
            <person name="Mayhew G.F."/>
            <person name="Rose D.J."/>
            <person name="Zhou S."/>
            <person name="Schwartz D.C."/>
            <person name="Perna N.T."/>
            <person name="Mobley H.L.T."/>
            <person name="Donnenberg M.S."/>
            <person name="Blattner F.R."/>
        </authorList>
    </citation>
    <scope>NUCLEOTIDE SEQUENCE [LARGE SCALE GENOMIC DNA]</scope>
    <source>
        <strain>CFT073 / ATCC 700928 / UPEC</strain>
    </source>
</reference>
<comment type="similarity">
    <text evidence="2">Belongs to the ABC transporter superfamily.</text>
</comment>
<sequence length="360" mass="40104">MAQLSLQHIQKIYDNQVHVVKDFNLEIADKEFIVFVGPSGCGKSTTLRMIAGLEEISGGDLLIDGKRMNDVPAKARNIAMVFQNYALYPHMTVYDNMAFGLKMQKIAREVIDERVNWAAQILGLREYLKRKPGALSGGQRQRVALGRAIVREAGVFLMDEPLSNLDAKLRVQMRAEISKLHQKLNTTMIYVTHDQTEAMTMATRIVIMKDGIVQQVGAPKTVYNQPANMFVAGFIGSPAMNFIRGTIDGNKFVTETLKLTIPEEKLAVLKTQESLHKPIVMGIRPEDIHPDAQEENNISAKISVAELTGAEFMLYTTVGGHELVVRAGALNDYHAGENITIHFDMTKCHFFDAETEIAIC</sequence>
<name>YCJV_ECOL6</name>
<evidence type="ECO:0000255" key="1">
    <source>
        <dbReference type="PROSITE-ProRule" id="PRU00434"/>
    </source>
</evidence>
<evidence type="ECO:0000305" key="2"/>
<feature type="chain" id="PRO_0000263026" description="Uncharacterized ABC transporter ATP-binding protein YcjV">
    <location>
        <begin position="1"/>
        <end position="360"/>
    </location>
</feature>
<feature type="domain" description="ABC transporter" evidence="1">
    <location>
        <begin position="4"/>
        <end position="235"/>
    </location>
</feature>
<feature type="binding site" evidence="1">
    <location>
        <begin position="37"/>
        <end position="44"/>
    </location>
    <ligand>
        <name>ATP</name>
        <dbReference type="ChEBI" id="CHEBI:30616"/>
    </ligand>
</feature>
<protein>
    <recommendedName>
        <fullName>Uncharacterized ABC transporter ATP-binding protein YcjV</fullName>
    </recommendedName>
</protein>
<accession>Q8FHR3</accession>
<organism>
    <name type="scientific">Escherichia coli O6:H1 (strain CFT073 / ATCC 700928 / UPEC)</name>
    <dbReference type="NCBI Taxonomy" id="199310"/>
    <lineage>
        <taxon>Bacteria</taxon>
        <taxon>Pseudomonadati</taxon>
        <taxon>Pseudomonadota</taxon>
        <taxon>Gammaproteobacteria</taxon>
        <taxon>Enterobacterales</taxon>
        <taxon>Enterobacteriaceae</taxon>
        <taxon>Escherichia</taxon>
    </lineage>
</organism>
<proteinExistence type="inferred from homology"/>